<geneLocation type="mitochondrion"/>
<proteinExistence type="inferred from homology"/>
<dbReference type="EMBL" id="AF271412">
    <property type="protein sequence ID" value="AAG17352.1"/>
    <property type="molecule type" value="Genomic_DNA"/>
</dbReference>
<dbReference type="SMR" id="Q9G9J4"/>
<dbReference type="FunCoup" id="Q9G9J4">
    <property type="interactions" value="331"/>
</dbReference>
<dbReference type="InParanoid" id="Q9G9J4"/>
<dbReference type="Proteomes" id="UP000005225">
    <property type="component" value="Unassembled WGS sequence"/>
</dbReference>
<dbReference type="GO" id="GO:0005743">
    <property type="term" value="C:mitochondrial inner membrane"/>
    <property type="evidence" value="ECO:0007669"/>
    <property type="project" value="UniProtKB-SubCell"/>
</dbReference>
<dbReference type="GO" id="GO:0045275">
    <property type="term" value="C:respiratory chain complex III"/>
    <property type="evidence" value="ECO:0007669"/>
    <property type="project" value="InterPro"/>
</dbReference>
<dbReference type="GO" id="GO:0046872">
    <property type="term" value="F:metal ion binding"/>
    <property type="evidence" value="ECO:0007669"/>
    <property type="project" value="UniProtKB-KW"/>
</dbReference>
<dbReference type="GO" id="GO:0008121">
    <property type="term" value="F:ubiquinol-cytochrome-c reductase activity"/>
    <property type="evidence" value="ECO:0007669"/>
    <property type="project" value="InterPro"/>
</dbReference>
<dbReference type="GO" id="GO:0006122">
    <property type="term" value="P:mitochondrial electron transport, ubiquinol to cytochrome c"/>
    <property type="evidence" value="ECO:0007669"/>
    <property type="project" value="TreeGrafter"/>
</dbReference>
<dbReference type="CDD" id="cd00290">
    <property type="entry name" value="cytochrome_b_C"/>
    <property type="match status" value="1"/>
</dbReference>
<dbReference type="CDD" id="cd00284">
    <property type="entry name" value="Cytochrome_b_N"/>
    <property type="match status" value="1"/>
</dbReference>
<dbReference type="FunFam" id="1.20.810.10:FF:000002">
    <property type="entry name" value="Cytochrome b"/>
    <property type="match status" value="1"/>
</dbReference>
<dbReference type="Gene3D" id="1.20.810.10">
    <property type="entry name" value="Cytochrome Bc1 Complex, Chain C"/>
    <property type="match status" value="1"/>
</dbReference>
<dbReference type="InterPro" id="IPR005798">
    <property type="entry name" value="Cyt_b/b6_C"/>
</dbReference>
<dbReference type="InterPro" id="IPR036150">
    <property type="entry name" value="Cyt_b/b6_C_sf"/>
</dbReference>
<dbReference type="InterPro" id="IPR005797">
    <property type="entry name" value="Cyt_b/b6_N"/>
</dbReference>
<dbReference type="InterPro" id="IPR027387">
    <property type="entry name" value="Cytb/b6-like_sf"/>
</dbReference>
<dbReference type="InterPro" id="IPR030689">
    <property type="entry name" value="Cytochrome_b"/>
</dbReference>
<dbReference type="InterPro" id="IPR048260">
    <property type="entry name" value="Cytochrome_b_C_euk/bac"/>
</dbReference>
<dbReference type="InterPro" id="IPR048259">
    <property type="entry name" value="Cytochrome_b_N_euk/bac"/>
</dbReference>
<dbReference type="InterPro" id="IPR016174">
    <property type="entry name" value="Di-haem_cyt_TM"/>
</dbReference>
<dbReference type="PANTHER" id="PTHR19271">
    <property type="entry name" value="CYTOCHROME B"/>
    <property type="match status" value="1"/>
</dbReference>
<dbReference type="PANTHER" id="PTHR19271:SF16">
    <property type="entry name" value="CYTOCHROME B"/>
    <property type="match status" value="1"/>
</dbReference>
<dbReference type="Pfam" id="PF00032">
    <property type="entry name" value="Cytochrom_B_C"/>
    <property type="match status" value="1"/>
</dbReference>
<dbReference type="Pfam" id="PF00033">
    <property type="entry name" value="Cytochrome_B"/>
    <property type="match status" value="1"/>
</dbReference>
<dbReference type="PIRSF" id="PIRSF038885">
    <property type="entry name" value="COB"/>
    <property type="match status" value="1"/>
</dbReference>
<dbReference type="SUPFAM" id="SSF81648">
    <property type="entry name" value="a domain/subunit of cytochrome bc1 complex (Ubiquinol-cytochrome c reductase)"/>
    <property type="match status" value="1"/>
</dbReference>
<dbReference type="SUPFAM" id="SSF81342">
    <property type="entry name" value="Transmembrane di-heme cytochromes"/>
    <property type="match status" value="1"/>
</dbReference>
<dbReference type="PROSITE" id="PS51003">
    <property type="entry name" value="CYTB_CTER"/>
    <property type="match status" value="1"/>
</dbReference>
<dbReference type="PROSITE" id="PS51002">
    <property type="entry name" value="CYTB_NTER"/>
    <property type="match status" value="1"/>
</dbReference>
<keyword id="KW-0249">Electron transport</keyword>
<keyword id="KW-0349">Heme</keyword>
<keyword id="KW-0408">Iron</keyword>
<keyword id="KW-0472">Membrane</keyword>
<keyword id="KW-0479">Metal-binding</keyword>
<keyword id="KW-0496">Mitochondrion</keyword>
<keyword id="KW-0999">Mitochondrion inner membrane</keyword>
<keyword id="KW-1185">Reference proteome</keyword>
<keyword id="KW-0679">Respiratory chain</keyword>
<keyword id="KW-0812">Transmembrane</keyword>
<keyword id="KW-1133">Transmembrane helix</keyword>
<keyword id="KW-0813">Transport</keyword>
<keyword id="KW-0830">Ubiquinone</keyword>
<evidence type="ECO:0000250" key="1"/>
<evidence type="ECO:0000250" key="2">
    <source>
        <dbReference type="UniProtKB" id="P00157"/>
    </source>
</evidence>
<evidence type="ECO:0000255" key="3">
    <source>
        <dbReference type="PROSITE-ProRule" id="PRU00967"/>
    </source>
</evidence>
<evidence type="ECO:0000255" key="4">
    <source>
        <dbReference type="PROSITE-ProRule" id="PRU00968"/>
    </source>
</evidence>
<gene>
    <name type="primary">MT-CYB</name>
    <name type="synonym">COB</name>
    <name type="synonym">CYTB</name>
    <name type="synonym">MTCYB</name>
</gene>
<reference key="1">
    <citation type="journal article" date="2001" name="Syst. Biol.">
        <title>Failure of the ILD to determine data combinability for slow loris phylogeny.</title>
        <authorList>
            <person name="Yoder A.D."/>
            <person name="Irwin J.A."/>
            <person name="Payseur B.A."/>
        </authorList>
    </citation>
    <scope>NUCLEOTIDE SEQUENCE [GENOMIC DNA]</scope>
    <source>
        <strain>Isolate DUPC 8030</strain>
    </source>
</reference>
<reference key="2">
    <citation type="submission" date="2011-03" db="EMBL/GenBank/DDBJ databases">
        <title>Version 3 of the genome sequence of Otolemur garnettii(Bushbaby).</title>
        <authorList>
            <consortium name="The Broad Institute Genome Sequencing Platform"/>
            <person name="Di Palma F."/>
            <person name="Johnson J."/>
            <person name="Lander E.S."/>
            <person name="Lindblad-Toh K."/>
            <person name="Jaffe D.B."/>
            <person name="Gnerre S."/>
            <person name="MacCallum I."/>
            <person name="Przybylski D."/>
            <person name="Ribeiro F.J."/>
            <person name="Burton J.N."/>
            <person name="Walker B.J."/>
            <person name="Sharpe T."/>
            <person name="Hall G."/>
        </authorList>
    </citation>
    <scope>NUCLEOTIDE SEQUENCE [LARGE SCALE GENOMIC DNA]</scope>
</reference>
<sequence>MTNIRKHHPLAKMINHSFIDLPAPSNISSWWNFGSLLGLCLVIQITTGLFLAMHYTSDTATAFSSVTHICRDVNYGWIIRYLHANGASMFFICLFMHIGRGLYYGSFTFLETWNIGITLLFAVMATAFMGYVLPWGQMSFWGATVITNLLSAIPYMGTNLVEWIWGGFSVDKATLTRFFAFHFILPFIIAALVMIHLLFLHESGSNNPSGIPSDSDKIPFHPYYTIKDLLGAILLLLTLFSLVLFSPDLLGDPDNYTPANPLNTPPHIKPEWYFLFAYAILRSIPNKLGGVLALALSILILALIPFLHSAKQRSMMFRPLSQCLYWVLVADLLTLTWIGGQPVENPFITIGQVASVIYFSTILILMPLTNLLENKLLKW</sequence>
<feature type="chain" id="PRO_0000061330" description="Cytochrome b">
    <location>
        <begin position="1"/>
        <end position="379"/>
    </location>
</feature>
<feature type="transmembrane region" description="Helical" evidence="2">
    <location>
        <begin position="33"/>
        <end position="53"/>
    </location>
</feature>
<feature type="transmembrane region" description="Helical" evidence="2">
    <location>
        <begin position="77"/>
        <end position="98"/>
    </location>
</feature>
<feature type="transmembrane region" description="Helical" evidence="2">
    <location>
        <begin position="113"/>
        <end position="133"/>
    </location>
</feature>
<feature type="transmembrane region" description="Helical" evidence="2">
    <location>
        <begin position="178"/>
        <end position="198"/>
    </location>
</feature>
<feature type="transmembrane region" description="Helical" evidence="2">
    <location>
        <begin position="226"/>
        <end position="246"/>
    </location>
</feature>
<feature type="transmembrane region" description="Helical" evidence="2">
    <location>
        <begin position="288"/>
        <end position="308"/>
    </location>
</feature>
<feature type="transmembrane region" description="Helical" evidence="2">
    <location>
        <begin position="320"/>
        <end position="340"/>
    </location>
</feature>
<feature type="transmembrane region" description="Helical" evidence="2">
    <location>
        <begin position="347"/>
        <end position="367"/>
    </location>
</feature>
<feature type="binding site" description="axial binding residue" evidence="2">
    <location>
        <position position="83"/>
    </location>
    <ligand>
        <name>heme b</name>
        <dbReference type="ChEBI" id="CHEBI:60344"/>
        <label>b562</label>
    </ligand>
    <ligandPart>
        <name>Fe</name>
        <dbReference type="ChEBI" id="CHEBI:18248"/>
    </ligandPart>
</feature>
<feature type="binding site" description="axial binding residue" evidence="2">
    <location>
        <position position="97"/>
    </location>
    <ligand>
        <name>heme b</name>
        <dbReference type="ChEBI" id="CHEBI:60344"/>
        <label>b566</label>
    </ligand>
    <ligandPart>
        <name>Fe</name>
        <dbReference type="ChEBI" id="CHEBI:18248"/>
    </ligandPart>
</feature>
<feature type="binding site" description="axial binding residue" evidence="2">
    <location>
        <position position="182"/>
    </location>
    <ligand>
        <name>heme b</name>
        <dbReference type="ChEBI" id="CHEBI:60344"/>
        <label>b562</label>
    </ligand>
    <ligandPart>
        <name>Fe</name>
        <dbReference type="ChEBI" id="CHEBI:18248"/>
    </ligandPart>
</feature>
<feature type="binding site" description="axial binding residue" evidence="2">
    <location>
        <position position="196"/>
    </location>
    <ligand>
        <name>heme b</name>
        <dbReference type="ChEBI" id="CHEBI:60344"/>
        <label>b566</label>
    </ligand>
    <ligandPart>
        <name>Fe</name>
        <dbReference type="ChEBI" id="CHEBI:18248"/>
    </ligandPart>
</feature>
<feature type="binding site" evidence="2">
    <location>
        <position position="201"/>
    </location>
    <ligand>
        <name>a ubiquinone</name>
        <dbReference type="ChEBI" id="CHEBI:16389"/>
    </ligand>
</feature>
<protein>
    <recommendedName>
        <fullName>Cytochrome b</fullName>
    </recommendedName>
    <alternativeName>
        <fullName>Complex III subunit 3</fullName>
    </alternativeName>
    <alternativeName>
        <fullName>Complex III subunit III</fullName>
    </alternativeName>
    <alternativeName>
        <fullName>Cytochrome b-c1 complex subunit 3</fullName>
    </alternativeName>
    <alternativeName>
        <fullName>Ubiquinol-cytochrome-c reductase complex cytochrome b subunit</fullName>
    </alternativeName>
</protein>
<organism>
    <name type="scientific">Otolemur garnettii</name>
    <name type="common">Small-eared galago</name>
    <name type="synonym">Garnett's greater bushbaby</name>
    <dbReference type="NCBI Taxonomy" id="30611"/>
    <lineage>
        <taxon>Eukaryota</taxon>
        <taxon>Metazoa</taxon>
        <taxon>Chordata</taxon>
        <taxon>Craniata</taxon>
        <taxon>Vertebrata</taxon>
        <taxon>Euteleostomi</taxon>
        <taxon>Mammalia</taxon>
        <taxon>Eutheria</taxon>
        <taxon>Euarchontoglires</taxon>
        <taxon>Primates</taxon>
        <taxon>Strepsirrhini</taxon>
        <taxon>Lorisiformes</taxon>
        <taxon>Galagidae</taxon>
        <taxon>Otolemur</taxon>
    </lineage>
</organism>
<accession>Q9G9J4</accession>
<name>CYB_OTOGA</name>
<comment type="function">
    <text evidence="2">Component of the ubiquinol-cytochrome c reductase complex (complex III or cytochrome b-c1 complex) that is part of the mitochondrial respiratory chain. The b-c1 complex mediates electron transfer from ubiquinol to cytochrome c. Contributes to the generation of a proton gradient across the mitochondrial membrane that is then used for ATP synthesis.</text>
</comment>
<comment type="cofactor">
    <cofactor evidence="2">
        <name>heme b</name>
        <dbReference type="ChEBI" id="CHEBI:60344"/>
    </cofactor>
    <text evidence="2">Binds 2 heme b groups non-covalently.</text>
</comment>
<comment type="subunit">
    <text evidence="2">The cytochrome bc1 complex contains 11 subunits: 3 respiratory subunits (MT-CYB, CYC1 and UQCRFS1), 2 core proteins (UQCRC1 and UQCRC2) and 6 low-molecular weight proteins (UQCRH/QCR6, UQCRB/QCR7, UQCRQ/QCR8, UQCR10/QCR9, UQCR11/QCR10 and a cleavage product of UQCRFS1). This cytochrome bc1 complex then forms a dimer.</text>
</comment>
<comment type="subcellular location">
    <subcellularLocation>
        <location evidence="2">Mitochondrion inner membrane</location>
        <topology evidence="2">Multi-pass membrane protein</topology>
    </subcellularLocation>
</comment>
<comment type="miscellaneous">
    <text evidence="1">Heme 1 (or BL or b562) is low-potential and absorbs at about 562 nm, and heme 2 (or BH or b566) is high-potential and absorbs at about 566 nm.</text>
</comment>
<comment type="similarity">
    <text evidence="3 4">Belongs to the cytochrome b family.</text>
</comment>
<comment type="caution">
    <text evidence="2">The full-length protein contains only eight transmembrane helices, not nine as predicted by bioinformatics tools.</text>
</comment>